<keyword id="KW-0687">Ribonucleoprotein</keyword>
<keyword id="KW-0689">Ribosomal protein</keyword>
<keyword id="KW-0694">RNA-binding</keyword>
<keyword id="KW-0699">rRNA-binding</keyword>
<evidence type="ECO:0000255" key="1">
    <source>
        <dbReference type="HAMAP-Rule" id="MF_01345"/>
    </source>
</evidence>
<evidence type="ECO:0000305" key="2"/>
<comment type="function">
    <text evidence="1">One of the primary rRNA binding proteins, it binds specifically to the 5'-end of 16S ribosomal RNA.</text>
</comment>
<comment type="subunit">
    <text evidence="1">Part of the 30S ribosomal subunit.</text>
</comment>
<comment type="similarity">
    <text evidence="1">Belongs to the universal ribosomal protein uS17 family.</text>
</comment>
<proteinExistence type="inferred from homology"/>
<protein>
    <recommendedName>
        <fullName evidence="1">Small ribosomal subunit protein uS17</fullName>
    </recommendedName>
    <alternativeName>
        <fullName evidence="2">30S ribosomal protein S17</fullName>
    </alternativeName>
</protein>
<name>RS17_ACIBS</name>
<dbReference type="EMBL" id="CU468230">
    <property type="protein sequence ID" value="CAO99823.1"/>
    <property type="molecule type" value="Genomic_DNA"/>
</dbReference>
<dbReference type="SMR" id="B0VQS7"/>
<dbReference type="KEGG" id="abm:ABSDF0432"/>
<dbReference type="HOGENOM" id="CLU_073626_1_1_6"/>
<dbReference type="Proteomes" id="UP000001741">
    <property type="component" value="Chromosome"/>
</dbReference>
<dbReference type="GO" id="GO:0022627">
    <property type="term" value="C:cytosolic small ribosomal subunit"/>
    <property type="evidence" value="ECO:0007669"/>
    <property type="project" value="TreeGrafter"/>
</dbReference>
<dbReference type="GO" id="GO:0019843">
    <property type="term" value="F:rRNA binding"/>
    <property type="evidence" value="ECO:0007669"/>
    <property type="project" value="UniProtKB-UniRule"/>
</dbReference>
<dbReference type="GO" id="GO:0003735">
    <property type="term" value="F:structural constituent of ribosome"/>
    <property type="evidence" value="ECO:0007669"/>
    <property type="project" value="InterPro"/>
</dbReference>
<dbReference type="GO" id="GO:0006412">
    <property type="term" value="P:translation"/>
    <property type="evidence" value="ECO:0007669"/>
    <property type="project" value="UniProtKB-UniRule"/>
</dbReference>
<dbReference type="CDD" id="cd00364">
    <property type="entry name" value="Ribosomal_uS17"/>
    <property type="match status" value="1"/>
</dbReference>
<dbReference type="FunFam" id="2.40.50.140:FF:000014">
    <property type="entry name" value="30S ribosomal protein S17"/>
    <property type="match status" value="1"/>
</dbReference>
<dbReference type="Gene3D" id="2.40.50.140">
    <property type="entry name" value="Nucleic acid-binding proteins"/>
    <property type="match status" value="1"/>
</dbReference>
<dbReference type="HAMAP" id="MF_01345_B">
    <property type="entry name" value="Ribosomal_uS17_B"/>
    <property type="match status" value="1"/>
</dbReference>
<dbReference type="InterPro" id="IPR012340">
    <property type="entry name" value="NA-bd_OB-fold"/>
</dbReference>
<dbReference type="InterPro" id="IPR000266">
    <property type="entry name" value="Ribosomal_uS17"/>
</dbReference>
<dbReference type="InterPro" id="IPR019984">
    <property type="entry name" value="Ribosomal_uS17_bact/chlr"/>
</dbReference>
<dbReference type="InterPro" id="IPR019979">
    <property type="entry name" value="Ribosomal_uS17_CS"/>
</dbReference>
<dbReference type="NCBIfam" id="NF004123">
    <property type="entry name" value="PRK05610.1"/>
    <property type="match status" value="1"/>
</dbReference>
<dbReference type="NCBIfam" id="TIGR03635">
    <property type="entry name" value="uS17_bact"/>
    <property type="match status" value="1"/>
</dbReference>
<dbReference type="PANTHER" id="PTHR10744">
    <property type="entry name" value="40S RIBOSOMAL PROTEIN S11 FAMILY MEMBER"/>
    <property type="match status" value="1"/>
</dbReference>
<dbReference type="PANTHER" id="PTHR10744:SF1">
    <property type="entry name" value="SMALL RIBOSOMAL SUBUNIT PROTEIN US17M"/>
    <property type="match status" value="1"/>
</dbReference>
<dbReference type="Pfam" id="PF00366">
    <property type="entry name" value="Ribosomal_S17"/>
    <property type="match status" value="1"/>
</dbReference>
<dbReference type="PRINTS" id="PR00973">
    <property type="entry name" value="RIBOSOMALS17"/>
</dbReference>
<dbReference type="SUPFAM" id="SSF50249">
    <property type="entry name" value="Nucleic acid-binding proteins"/>
    <property type="match status" value="1"/>
</dbReference>
<dbReference type="PROSITE" id="PS00056">
    <property type="entry name" value="RIBOSOMAL_S17"/>
    <property type="match status" value="1"/>
</dbReference>
<gene>
    <name evidence="1" type="primary">rpsQ</name>
    <name type="ordered locus">ABSDF0432</name>
</gene>
<accession>B0VQS7</accession>
<reference key="1">
    <citation type="journal article" date="2008" name="PLoS ONE">
        <title>Comparative analysis of Acinetobacters: three genomes for three lifestyles.</title>
        <authorList>
            <person name="Vallenet D."/>
            <person name="Nordmann P."/>
            <person name="Barbe V."/>
            <person name="Poirel L."/>
            <person name="Mangenot S."/>
            <person name="Bataille E."/>
            <person name="Dossat C."/>
            <person name="Gas S."/>
            <person name="Kreimeyer A."/>
            <person name="Lenoble P."/>
            <person name="Oztas S."/>
            <person name="Poulain J."/>
            <person name="Segurens B."/>
            <person name="Robert C."/>
            <person name="Abergel C."/>
            <person name="Claverie J.-M."/>
            <person name="Raoult D."/>
            <person name="Medigue C."/>
            <person name="Weissenbach J."/>
            <person name="Cruveiller S."/>
        </authorList>
    </citation>
    <scope>NUCLEOTIDE SEQUENCE [LARGE SCALE GENOMIC DNA]</scope>
    <source>
        <strain>SDF</strain>
    </source>
</reference>
<sequence length="85" mass="9524">MSEKTVRTLTGKVVSDKMDKSIVVLIERRVQHPLYGKSIRRSTKLHAHDENNVAKIGDVVTIKESRPISKTKAWTLVEVVEAAAE</sequence>
<organism>
    <name type="scientific">Acinetobacter baumannii (strain SDF)</name>
    <dbReference type="NCBI Taxonomy" id="509170"/>
    <lineage>
        <taxon>Bacteria</taxon>
        <taxon>Pseudomonadati</taxon>
        <taxon>Pseudomonadota</taxon>
        <taxon>Gammaproteobacteria</taxon>
        <taxon>Moraxellales</taxon>
        <taxon>Moraxellaceae</taxon>
        <taxon>Acinetobacter</taxon>
        <taxon>Acinetobacter calcoaceticus/baumannii complex</taxon>
    </lineage>
</organism>
<feature type="chain" id="PRO_1000143210" description="Small ribosomal subunit protein uS17">
    <location>
        <begin position="1"/>
        <end position="85"/>
    </location>
</feature>